<evidence type="ECO:0000250" key="1">
    <source>
        <dbReference type="UniProtKB" id="O88792"/>
    </source>
</evidence>
<evidence type="ECO:0000255" key="2"/>
<evidence type="ECO:0000269" key="3">
    <source>
    </source>
</evidence>
<evidence type="ECO:0000269" key="4">
    <source>
    </source>
</evidence>
<evidence type="ECO:0000269" key="5">
    <source>
    </source>
</evidence>
<evidence type="ECO:0000269" key="6">
    <source>
    </source>
</evidence>
<evidence type="ECO:0000269" key="7">
    <source>
    </source>
</evidence>
<evidence type="ECO:0000269" key="8">
    <source>
    </source>
</evidence>
<evidence type="ECO:0000269" key="9">
    <source>
    </source>
</evidence>
<evidence type="ECO:0000269" key="10">
    <source>
    </source>
</evidence>
<evidence type="ECO:0000269" key="11">
    <source>
    </source>
</evidence>
<evidence type="ECO:0000269" key="12">
    <source>
    </source>
</evidence>
<evidence type="ECO:0000269" key="13">
    <source>
    </source>
</evidence>
<evidence type="ECO:0000269" key="14">
    <source>
    </source>
</evidence>
<evidence type="ECO:0000269" key="15">
    <source>
    </source>
</evidence>
<evidence type="ECO:0000269" key="16">
    <source>
    </source>
</evidence>
<evidence type="ECO:0000303" key="17">
    <source>
    </source>
</evidence>
<evidence type="ECO:0000305" key="18"/>
<evidence type="ECO:0007744" key="19">
    <source>
    </source>
</evidence>
<evidence type="ECO:0007744" key="20">
    <source>
    </source>
</evidence>
<evidence type="ECO:0007744" key="21">
    <source>
    </source>
</evidence>
<evidence type="ECO:0007744" key="22">
    <source>
    </source>
</evidence>
<evidence type="ECO:0007744" key="23">
    <source>
    </source>
</evidence>
<evidence type="ECO:0007744" key="24">
    <source>
    </source>
</evidence>
<evidence type="ECO:0007744" key="25">
    <source>
    </source>
</evidence>
<evidence type="ECO:0007829" key="26">
    <source>
        <dbReference type="PDB" id="1NBQ"/>
    </source>
</evidence>
<evidence type="ECO:0007829" key="27">
    <source>
        <dbReference type="PDB" id="3EOY"/>
    </source>
</evidence>
<evidence type="ECO:0007829" key="28">
    <source>
        <dbReference type="PDB" id="4ODB"/>
    </source>
</evidence>
<accession>Q9Y624</accession>
<accession>B7Z941</accession>
<proteinExistence type="evidence at protein level"/>
<organism>
    <name type="scientific">Homo sapiens</name>
    <name type="common">Human</name>
    <dbReference type="NCBI Taxonomy" id="9606"/>
    <lineage>
        <taxon>Eukaryota</taxon>
        <taxon>Metazoa</taxon>
        <taxon>Chordata</taxon>
        <taxon>Craniata</taxon>
        <taxon>Vertebrata</taxon>
        <taxon>Euteleostomi</taxon>
        <taxon>Mammalia</taxon>
        <taxon>Eutheria</taxon>
        <taxon>Euarchontoglires</taxon>
        <taxon>Primates</taxon>
        <taxon>Haplorrhini</taxon>
        <taxon>Catarrhini</taxon>
        <taxon>Hominidae</taxon>
        <taxon>Homo</taxon>
    </lineage>
</organism>
<reference key="1">
    <citation type="journal article" date="1999" name="J. Immunol.">
        <title>Combined treatment of TNF-alpha and IFN-gamma causes redistribution of junctional adhesion molecule in human endothelial cells.</title>
        <authorList>
            <person name="Ozaki H."/>
            <person name="Ishii K."/>
            <person name="Horiuchi H."/>
            <person name="Arai H."/>
            <person name="Kawamoto T."/>
            <person name="Okawa K."/>
            <person name="Iwamatsu A."/>
            <person name="Kita T."/>
        </authorList>
    </citation>
    <scope>NUCLEOTIDE SEQUENCE [MRNA] (ISOFORM 1)</scope>
</reference>
<reference key="2">
    <citation type="journal article" date="2000" name="Blood">
        <title>Cloning of the human platelet F11 receptor: a cell adhesion molecule member of the immunoglobulin superfamily involved in platelet aggregation.</title>
        <authorList>
            <person name="Sobocka M.B."/>
            <person name="Sobocki T."/>
            <person name="Banerjee P."/>
            <person name="Weiss C."/>
            <person name="Rushbrook J.I."/>
            <person name="Norin A.J."/>
            <person name="Hartwig J."/>
            <person name="Salifu M.O."/>
            <person name="Markell M.S."/>
            <person name="Babinska A."/>
            <person name="Ehrlich Y.H."/>
            <person name="Kornecki E."/>
        </authorList>
    </citation>
    <scope>NUCLEOTIDE SEQUENCE [MRNA] (ISOFORM 1)</scope>
    <scope>FUNCTION</scope>
</reference>
<reference key="3">
    <citation type="journal article" date="2001" name="J. Cell Sci.">
        <title>Characterization and chromosomal localization of JAM-1, a platelet receptor for a stimulatory monoclonal antibody.</title>
        <authorList>
            <person name="Naik U.P."/>
            <person name="Naik M.U."/>
            <person name="Eckfeld K."/>
            <person name="Martin-DeLeon P."/>
            <person name="Spychala J."/>
        </authorList>
    </citation>
    <scope>NUCLEOTIDE SEQUENCE [MRNA] (ISOFORM 1)</scope>
    <scope>SUBCELLULAR LOCATION</scope>
</reference>
<reference key="4">
    <citation type="journal article" date="2001" name="Genome Res.">
        <title>Towards a catalog of human genes and proteins: sequencing and analysis of 500 novel complete protein coding human cDNAs.</title>
        <authorList>
            <person name="Wiemann S."/>
            <person name="Weil B."/>
            <person name="Wellenreuther R."/>
            <person name="Gassenhuber J."/>
            <person name="Glassl S."/>
            <person name="Ansorge W."/>
            <person name="Boecher M."/>
            <person name="Bloecker H."/>
            <person name="Bauersachs S."/>
            <person name="Blum H."/>
            <person name="Lauber J."/>
            <person name="Duesterhoeft A."/>
            <person name="Beyer A."/>
            <person name="Koehrer K."/>
            <person name="Strack N."/>
            <person name="Mewes H.-W."/>
            <person name="Ottenwaelder B."/>
            <person name="Obermaier B."/>
            <person name="Tampe J."/>
            <person name="Heubner D."/>
            <person name="Wambutt R."/>
            <person name="Korn B."/>
            <person name="Klein M."/>
            <person name="Poustka A."/>
        </authorList>
    </citation>
    <scope>NUCLEOTIDE SEQUENCE [LARGE SCALE MRNA] (ISOFORM 1)</scope>
    <source>
        <tissue>Brain</tissue>
    </source>
</reference>
<reference key="5">
    <citation type="journal article" date="2003" name="Genome Res.">
        <title>The secreted protein discovery initiative (SPDI), a large-scale effort to identify novel human secreted and transmembrane proteins: a bioinformatics assessment.</title>
        <authorList>
            <person name="Clark H.F."/>
            <person name="Gurney A.L."/>
            <person name="Abaya E."/>
            <person name="Baker K."/>
            <person name="Baldwin D.T."/>
            <person name="Brush J."/>
            <person name="Chen J."/>
            <person name="Chow B."/>
            <person name="Chui C."/>
            <person name="Crowley C."/>
            <person name="Currell B."/>
            <person name="Deuel B."/>
            <person name="Dowd P."/>
            <person name="Eaton D."/>
            <person name="Foster J.S."/>
            <person name="Grimaldi C."/>
            <person name="Gu Q."/>
            <person name="Hass P.E."/>
            <person name="Heldens S."/>
            <person name="Huang A."/>
            <person name="Kim H.S."/>
            <person name="Klimowski L."/>
            <person name="Jin Y."/>
            <person name="Johnson S."/>
            <person name="Lee J."/>
            <person name="Lewis L."/>
            <person name="Liao D."/>
            <person name="Mark M.R."/>
            <person name="Robbie E."/>
            <person name="Sanchez C."/>
            <person name="Schoenfeld J."/>
            <person name="Seshagiri S."/>
            <person name="Simmons L."/>
            <person name="Singh J."/>
            <person name="Smith V."/>
            <person name="Stinson J."/>
            <person name="Vagts A."/>
            <person name="Vandlen R.L."/>
            <person name="Watanabe C."/>
            <person name="Wieand D."/>
            <person name="Woods K."/>
            <person name="Xie M.-H."/>
            <person name="Yansura D.G."/>
            <person name="Yi S."/>
            <person name="Yu G."/>
            <person name="Yuan J."/>
            <person name="Zhang M."/>
            <person name="Zhang Z."/>
            <person name="Goddard A.D."/>
            <person name="Wood W.I."/>
            <person name="Godowski P.J."/>
            <person name="Gray A.M."/>
        </authorList>
    </citation>
    <scope>NUCLEOTIDE SEQUENCE [LARGE SCALE MRNA] (ISOFORM 1)</scope>
</reference>
<reference key="6">
    <citation type="journal article" date="2004" name="Nat. Genet.">
        <title>Complete sequencing and characterization of 21,243 full-length human cDNAs.</title>
        <authorList>
            <person name="Ota T."/>
            <person name="Suzuki Y."/>
            <person name="Nishikawa T."/>
            <person name="Otsuki T."/>
            <person name="Sugiyama T."/>
            <person name="Irie R."/>
            <person name="Wakamatsu A."/>
            <person name="Hayashi K."/>
            <person name="Sato H."/>
            <person name="Nagai K."/>
            <person name="Kimura K."/>
            <person name="Makita H."/>
            <person name="Sekine M."/>
            <person name="Obayashi M."/>
            <person name="Nishi T."/>
            <person name="Shibahara T."/>
            <person name="Tanaka T."/>
            <person name="Ishii S."/>
            <person name="Yamamoto J."/>
            <person name="Saito K."/>
            <person name="Kawai Y."/>
            <person name="Isono Y."/>
            <person name="Nakamura Y."/>
            <person name="Nagahari K."/>
            <person name="Murakami K."/>
            <person name="Yasuda T."/>
            <person name="Iwayanagi T."/>
            <person name="Wagatsuma M."/>
            <person name="Shiratori A."/>
            <person name="Sudo H."/>
            <person name="Hosoiri T."/>
            <person name="Kaku Y."/>
            <person name="Kodaira H."/>
            <person name="Kondo H."/>
            <person name="Sugawara M."/>
            <person name="Takahashi M."/>
            <person name="Kanda K."/>
            <person name="Yokoi T."/>
            <person name="Furuya T."/>
            <person name="Kikkawa E."/>
            <person name="Omura Y."/>
            <person name="Abe K."/>
            <person name="Kamihara K."/>
            <person name="Katsuta N."/>
            <person name="Sato K."/>
            <person name="Tanikawa M."/>
            <person name="Yamazaki M."/>
            <person name="Ninomiya K."/>
            <person name="Ishibashi T."/>
            <person name="Yamashita H."/>
            <person name="Murakawa K."/>
            <person name="Fujimori K."/>
            <person name="Tanai H."/>
            <person name="Kimata M."/>
            <person name="Watanabe M."/>
            <person name="Hiraoka S."/>
            <person name="Chiba Y."/>
            <person name="Ishida S."/>
            <person name="Ono Y."/>
            <person name="Takiguchi S."/>
            <person name="Watanabe S."/>
            <person name="Yosida M."/>
            <person name="Hotuta T."/>
            <person name="Kusano J."/>
            <person name="Kanehori K."/>
            <person name="Takahashi-Fujii A."/>
            <person name="Hara H."/>
            <person name="Tanase T.-O."/>
            <person name="Nomura Y."/>
            <person name="Togiya S."/>
            <person name="Komai F."/>
            <person name="Hara R."/>
            <person name="Takeuchi K."/>
            <person name="Arita M."/>
            <person name="Imose N."/>
            <person name="Musashino K."/>
            <person name="Yuuki H."/>
            <person name="Oshima A."/>
            <person name="Sasaki N."/>
            <person name="Aotsuka S."/>
            <person name="Yoshikawa Y."/>
            <person name="Matsunawa H."/>
            <person name="Ichihara T."/>
            <person name="Shiohata N."/>
            <person name="Sano S."/>
            <person name="Moriya S."/>
            <person name="Momiyama H."/>
            <person name="Satoh N."/>
            <person name="Takami S."/>
            <person name="Terashima Y."/>
            <person name="Suzuki O."/>
            <person name="Nakagawa S."/>
            <person name="Senoh A."/>
            <person name="Mizoguchi H."/>
            <person name="Goto Y."/>
            <person name="Shimizu F."/>
            <person name="Wakebe H."/>
            <person name="Hishigaki H."/>
            <person name="Watanabe T."/>
            <person name="Sugiyama A."/>
            <person name="Takemoto M."/>
            <person name="Kawakami B."/>
            <person name="Yamazaki M."/>
            <person name="Watanabe K."/>
            <person name="Kumagai A."/>
            <person name="Itakura S."/>
            <person name="Fukuzumi Y."/>
            <person name="Fujimori Y."/>
            <person name="Komiyama M."/>
            <person name="Tashiro H."/>
            <person name="Tanigami A."/>
            <person name="Fujiwara T."/>
            <person name="Ono T."/>
            <person name="Yamada K."/>
            <person name="Fujii Y."/>
            <person name="Ozaki K."/>
            <person name="Hirao M."/>
            <person name="Ohmori Y."/>
            <person name="Kawabata A."/>
            <person name="Hikiji T."/>
            <person name="Kobatake N."/>
            <person name="Inagaki H."/>
            <person name="Ikema Y."/>
            <person name="Okamoto S."/>
            <person name="Okitani R."/>
            <person name="Kawakami T."/>
            <person name="Noguchi S."/>
            <person name="Itoh T."/>
            <person name="Shigeta K."/>
            <person name="Senba T."/>
            <person name="Matsumura K."/>
            <person name="Nakajima Y."/>
            <person name="Mizuno T."/>
            <person name="Morinaga M."/>
            <person name="Sasaki M."/>
            <person name="Togashi T."/>
            <person name="Oyama M."/>
            <person name="Hata H."/>
            <person name="Watanabe M."/>
            <person name="Komatsu T."/>
            <person name="Mizushima-Sugano J."/>
            <person name="Satoh T."/>
            <person name="Shirai Y."/>
            <person name="Takahashi Y."/>
            <person name="Nakagawa K."/>
            <person name="Okumura K."/>
            <person name="Nagase T."/>
            <person name="Nomura N."/>
            <person name="Kikuchi H."/>
            <person name="Masuho Y."/>
            <person name="Yamashita R."/>
            <person name="Nakai K."/>
            <person name="Yada T."/>
            <person name="Nakamura Y."/>
            <person name="Ohara O."/>
            <person name="Isogai T."/>
            <person name="Sugano S."/>
        </authorList>
    </citation>
    <scope>NUCLEOTIDE SEQUENCE [LARGE SCALE MRNA] (ISOFORM 2)</scope>
    <source>
        <tissue>Trachea</tissue>
    </source>
</reference>
<reference key="7">
    <citation type="journal article" date="2006" name="Nature">
        <title>The DNA sequence and biological annotation of human chromosome 1.</title>
        <authorList>
            <person name="Gregory S.G."/>
            <person name="Barlow K.F."/>
            <person name="McLay K.E."/>
            <person name="Kaul R."/>
            <person name="Swarbreck D."/>
            <person name="Dunham A."/>
            <person name="Scott C.E."/>
            <person name="Howe K.L."/>
            <person name="Woodfine K."/>
            <person name="Spencer C.C.A."/>
            <person name="Jones M.C."/>
            <person name="Gillson C."/>
            <person name="Searle S."/>
            <person name="Zhou Y."/>
            <person name="Kokocinski F."/>
            <person name="McDonald L."/>
            <person name="Evans R."/>
            <person name="Phillips K."/>
            <person name="Atkinson A."/>
            <person name="Cooper R."/>
            <person name="Jones C."/>
            <person name="Hall R.E."/>
            <person name="Andrews T.D."/>
            <person name="Lloyd C."/>
            <person name="Ainscough R."/>
            <person name="Almeida J.P."/>
            <person name="Ambrose K.D."/>
            <person name="Anderson F."/>
            <person name="Andrew R.W."/>
            <person name="Ashwell R.I.S."/>
            <person name="Aubin K."/>
            <person name="Babbage A.K."/>
            <person name="Bagguley C.L."/>
            <person name="Bailey J."/>
            <person name="Beasley H."/>
            <person name="Bethel G."/>
            <person name="Bird C.P."/>
            <person name="Bray-Allen S."/>
            <person name="Brown J.Y."/>
            <person name="Brown A.J."/>
            <person name="Buckley D."/>
            <person name="Burton J."/>
            <person name="Bye J."/>
            <person name="Carder C."/>
            <person name="Chapman J.C."/>
            <person name="Clark S.Y."/>
            <person name="Clarke G."/>
            <person name="Clee C."/>
            <person name="Cobley V."/>
            <person name="Collier R.E."/>
            <person name="Corby N."/>
            <person name="Coville G.J."/>
            <person name="Davies J."/>
            <person name="Deadman R."/>
            <person name="Dunn M."/>
            <person name="Earthrowl M."/>
            <person name="Ellington A.G."/>
            <person name="Errington H."/>
            <person name="Frankish A."/>
            <person name="Frankland J."/>
            <person name="French L."/>
            <person name="Garner P."/>
            <person name="Garnett J."/>
            <person name="Gay L."/>
            <person name="Ghori M.R.J."/>
            <person name="Gibson R."/>
            <person name="Gilby L.M."/>
            <person name="Gillett W."/>
            <person name="Glithero R.J."/>
            <person name="Grafham D.V."/>
            <person name="Griffiths C."/>
            <person name="Griffiths-Jones S."/>
            <person name="Grocock R."/>
            <person name="Hammond S."/>
            <person name="Harrison E.S.I."/>
            <person name="Hart E."/>
            <person name="Haugen E."/>
            <person name="Heath P.D."/>
            <person name="Holmes S."/>
            <person name="Holt K."/>
            <person name="Howden P.J."/>
            <person name="Hunt A.R."/>
            <person name="Hunt S.E."/>
            <person name="Hunter G."/>
            <person name="Isherwood J."/>
            <person name="James R."/>
            <person name="Johnson C."/>
            <person name="Johnson D."/>
            <person name="Joy A."/>
            <person name="Kay M."/>
            <person name="Kershaw J.K."/>
            <person name="Kibukawa M."/>
            <person name="Kimberley A.M."/>
            <person name="King A."/>
            <person name="Knights A.J."/>
            <person name="Lad H."/>
            <person name="Laird G."/>
            <person name="Lawlor S."/>
            <person name="Leongamornlert D.A."/>
            <person name="Lloyd D.M."/>
            <person name="Loveland J."/>
            <person name="Lovell J."/>
            <person name="Lush M.J."/>
            <person name="Lyne R."/>
            <person name="Martin S."/>
            <person name="Mashreghi-Mohammadi M."/>
            <person name="Matthews L."/>
            <person name="Matthews N.S.W."/>
            <person name="McLaren S."/>
            <person name="Milne S."/>
            <person name="Mistry S."/>
            <person name="Moore M.J.F."/>
            <person name="Nickerson T."/>
            <person name="O'Dell C.N."/>
            <person name="Oliver K."/>
            <person name="Palmeiri A."/>
            <person name="Palmer S.A."/>
            <person name="Parker A."/>
            <person name="Patel D."/>
            <person name="Pearce A.V."/>
            <person name="Peck A.I."/>
            <person name="Pelan S."/>
            <person name="Phelps K."/>
            <person name="Phillimore B.J."/>
            <person name="Plumb R."/>
            <person name="Rajan J."/>
            <person name="Raymond C."/>
            <person name="Rouse G."/>
            <person name="Saenphimmachak C."/>
            <person name="Sehra H.K."/>
            <person name="Sheridan E."/>
            <person name="Shownkeen R."/>
            <person name="Sims S."/>
            <person name="Skuce C.D."/>
            <person name="Smith M."/>
            <person name="Steward C."/>
            <person name="Subramanian S."/>
            <person name="Sycamore N."/>
            <person name="Tracey A."/>
            <person name="Tromans A."/>
            <person name="Van Helmond Z."/>
            <person name="Wall M."/>
            <person name="Wallis J.M."/>
            <person name="White S."/>
            <person name="Whitehead S.L."/>
            <person name="Wilkinson J.E."/>
            <person name="Willey D.L."/>
            <person name="Williams H."/>
            <person name="Wilming L."/>
            <person name="Wray P.W."/>
            <person name="Wu Z."/>
            <person name="Coulson A."/>
            <person name="Vaudin M."/>
            <person name="Sulston J.E."/>
            <person name="Durbin R.M."/>
            <person name="Hubbard T."/>
            <person name="Wooster R."/>
            <person name="Dunham I."/>
            <person name="Carter N.P."/>
            <person name="McVean G."/>
            <person name="Ross M.T."/>
            <person name="Harrow J."/>
            <person name="Olson M.V."/>
            <person name="Beck S."/>
            <person name="Rogers J."/>
            <person name="Bentley D.R."/>
        </authorList>
    </citation>
    <scope>NUCLEOTIDE SEQUENCE [LARGE SCALE GENOMIC DNA]</scope>
</reference>
<reference key="8">
    <citation type="journal article" date="2004" name="Genome Res.">
        <title>The status, quality, and expansion of the NIH full-length cDNA project: the Mammalian Gene Collection (MGC).</title>
        <authorList>
            <consortium name="The MGC Project Team"/>
        </authorList>
    </citation>
    <scope>NUCLEOTIDE SEQUENCE [LARGE SCALE MRNA] (ISOFORM 1)</scope>
    <source>
        <tissue>Ovary</tissue>
    </source>
</reference>
<reference key="9">
    <citation type="journal article" date="1995" name="Biochem. J.">
        <title>Mechanisms of platelet activation by a stimulatory antibody: cross-linking of a novel platelet receptor for monoclonal antibody F11 with the Fc gamma RII receptor.</title>
        <authorList>
            <person name="Naik U.P."/>
            <person name="Ehrlich Y.H."/>
            <person name="Kornecki E."/>
        </authorList>
    </citation>
    <scope>PROTEIN SEQUENCE OF 28-103 AND 123-130</scope>
    <scope>GLYCOSYLATION</scope>
</reference>
<reference key="10">
    <citation type="journal article" date="2004" name="Protein Sci.">
        <title>Signal peptide prediction based on analysis of experimentally verified cleavage sites.</title>
        <authorList>
            <person name="Zhang Z."/>
            <person name="Henzel W.J."/>
        </authorList>
    </citation>
    <scope>PROTEIN SEQUENCE OF 28-42</scope>
</reference>
<reference key="11">
    <citation type="journal article" date="2003" name="Nat. Biotechnol.">
        <title>Exploring proteomes and analyzing protein processing by mass spectrometric identification of sorted N-terminal peptides.</title>
        <authorList>
            <person name="Gevaert K."/>
            <person name="Goethals M."/>
            <person name="Martens L."/>
            <person name="Van Damme J."/>
            <person name="Staes A."/>
            <person name="Thomas G.R."/>
            <person name="Vandekerckhove J."/>
        </authorList>
    </citation>
    <scope>PROTEIN SEQUENCE OF 28-39</scope>
    <source>
        <tissue>Platelet</tissue>
    </source>
</reference>
<reference key="12">
    <citation type="journal article" date="2001" name="J. Cell Biol.">
        <title>Junctional adhesion molecule (JAM) binds to PAR-3: a possible mechanism for the recruitment of PAR-3 to tight junctions.</title>
        <authorList>
            <person name="Itoh M."/>
            <person name="Sasaki H."/>
            <person name="Furuse M."/>
            <person name="Ozaki H."/>
            <person name="Kita T."/>
            <person name="Tsukita S."/>
        </authorList>
    </citation>
    <scope>FUNCTION</scope>
    <scope>INTERACTION WITH MPDZ</scope>
</reference>
<reference key="13">
    <citation type="journal article" date="2001" name="Cell">
        <title>Junction adhesion molecule is a receptor for reovirus.</title>
        <authorList>
            <person name="Barton E.S."/>
            <person name="Forrest J.C."/>
            <person name="Connolly J.L."/>
            <person name="Chappell J.D."/>
            <person name="Liu Y."/>
            <person name="Schnell F.J."/>
            <person name="Nusrat A."/>
            <person name="Parkos C.A."/>
            <person name="Dermody T.S."/>
        </authorList>
    </citation>
    <scope>FUNCTION (MICROBIAL INFECTION)</scope>
    <scope>INTERACTION WITH MAMMALIAN REOVIRUS SIGMA-1 PROTEIN</scope>
</reference>
<reference key="14">
    <citation type="journal article" date="2002" name="Nat. Immunol.">
        <title>JAM-1 is a ligand of the beta(2) integrin LFA-1 involved in transendothelial migration of leukocytes.</title>
        <authorList>
            <person name="Ostermann G."/>
            <person name="Weber K.S."/>
            <person name="Zernecke A."/>
            <person name="Schroeder A."/>
            <person name="Weber C."/>
        </authorList>
    </citation>
    <scope>FUNCTION</scope>
    <scope>SUBCELLULAR LOCATION</scope>
    <scope>TISSUE SPECIFICITY</scope>
    <scope>DOMAIN</scope>
</reference>
<reference key="15">
    <citation type="journal article" date="2003" name="Trends Immunol.">
        <title>Leukocyte-endothelial-cell interactions in leukocyte transmigration and the inflammatory response.</title>
        <authorList>
            <person name="Muller W.A."/>
        </authorList>
    </citation>
    <scope>REVIEW</scope>
    <scope>NOMENCLATURE</scope>
</reference>
<reference key="16">
    <citation type="journal article" date="2004" name="J. Immunol.">
        <title>The functional interaction of the beta 2 integrin lymphocyte function-associated antigen-1 with junctional adhesion molecule-A is mediated by the I domain.</title>
        <authorList>
            <person name="Fraemohs L."/>
            <person name="Koenen R.R."/>
            <person name="Ostermann G."/>
            <person name="Heinemann B."/>
            <person name="Weber C."/>
        </authorList>
    </citation>
    <scope>INTERACTION WITH ITGAL</scope>
</reference>
<reference key="17">
    <citation type="journal article" date="2008" name="J. Proteome Res.">
        <title>Phosphoproteome of resting human platelets.</title>
        <authorList>
            <person name="Zahedi R.P."/>
            <person name="Lewandrowski U."/>
            <person name="Wiesner J."/>
            <person name="Wortelkamp S."/>
            <person name="Moebius J."/>
            <person name="Schuetz C."/>
            <person name="Walter U."/>
            <person name="Gambaryan S."/>
            <person name="Sickmann A."/>
        </authorList>
    </citation>
    <scope>PHOSPHORYLATION [LARGE SCALE ANALYSIS] AT SER-284</scope>
    <scope>IDENTIFICATION BY MASS SPECTROMETRY [LARGE SCALE ANALYSIS]</scope>
    <source>
        <tissue>Platelet</tissue>
    </source>
</reference>
<reference key="18">
    <citation type="journal article" date="2008" name="Proc. Natl. Acad. Sci. U.S.A.">
        <title>A quantitative atlas of mitotic phosphorylation.</title>
        <authorList>
            <person name="Dephoure N."/>
            <person name="Zhou C."/>
            <person name="Villen J."/>
            <person name="Beausoleil S.A."/>
            <person name="Bakalarski C.E."/>
            <person name="Elledge S.J."/>
            <person name="Gygi S.P."/>
        </authorList>
    </citation>
    <scope>PHOSPHORYLATION [LARGE SCALE ANALYSIS] AT SER-281; SER-284 AND SER-287</scope>
    <scope>IDENTIFICATION BY MASS SPECTROMETRY [LARGE SCALE ANALYSIS]</scope>
    <source>
        <tissue>Cervix carcinoma</tissue>
    </source>
</reference>
<reference key="19">
    <citation type="journal article" date="2009" name="J. Proteome Res.">
        <title>Glycoproteomics analysis of human liver tissue by combination of multiple enzyme digestion and hydrazide chemistry.</title>
        <authorList>
            <person name="Chen R."/>
            <person name="Jiang X."/>
            <person name="Sun D."/>
            <person name="Han G."/>
            <person name="Wang F."/>
            <person name="Ye M."/>
            <person name="Wang L."/>
            <person name="Zou H."/>
        </authorList>
    </citation>
    <scope>GLYCOSYLATION [LARGE SCALE ANALYSIS] AT ASN-185</scope>
    <source>
        <tissue>Liver</tissue>
    </source>
</reference>
<reference key="20">
    <citation type="journal article" date="2010" name="Sci. Signal.">
        <title>Quantitative phosphoproteomics reveals widespread full phosphorylation site occupancy during mitosis.</title>
        <authorList>
            <person name="Olsen J.V."/>
            <person name="Vermeulen M."/>
            <person name="Santamaria A."/>
            <person name="Kumar C."/>
            <person name="Miller M.L."/>
            <person name="Jensen L.J."/>
            <person name="Gnad F."/>
            <person name="Cox J."/>
            <person name="Jensen T.S."/>
            <person name="Nigg E.A."/>
            <person name="Brunak S."/>
            <person name="Mann M."/>
        </authorList>
    </citation>
    <scope>PHOSPHORYLATION [LARGE SCALE ANALYSIS] AT SER-284</scope>
    <scope>IDENTIFICATION BY MASS SPECTROMETRY [LARGE SCALE ANALYSIS]</scope>
    <source>
        <tissue>Cervix carcinoma</tissue>
    </source>
</reference>
<reference key="21">
    <citation type="journal article" date="2011" name="BMC Syst. Biol.">
        <title>Initial characterization of the human central proteome.</title>
        <authorList>
            <person name="Burkard T.R."/>
            <person name="Planyavsky M."/>
            <person name="Kaupe I."/>
            <person name="Breitwieser F.P."/>
            <person name="Buerckstuemmer T."/>
            <person name="Bennett K.L."/>
            <person name="Superti-Furga G."/>
            <person name="Colinge J."/>
        </authorList>
    </citation>
    <scope>IDENTIFICATION BY MASS SPECTROMETRY [LARGE SCALE ANALYSIS]</scope>
</reference>
<reference key="22">
    <citation type="journal article" date="2011" name="Sci. Signal.">
        <title>System-wide temporal characterization of the proteome and phosphoproteome of human embryonic stem cell differentiation.</title>
        <authorList>
            <person name="Rigbolt K.T."/>
            <person name="Prokhorova T.A."/>
            <person name="Akimov V."/>
            <person name="Henningsen J."/>
            <person name="Johansen P.T."/>
            <person name="Kratchmarova I."/>
            <person name="Kassem M."/>
            <person name="Mann M."/>
            <person name="Olsen J.V."/>
            <person name="Blagoev B."/>
        </authorList>
    </citation>
    <scope>PHOSPHORYLATION [LARGE SCALE ANALYSIS] AT SER-284</scope>
    <scope>IDENTIFICATION BY MASS SPECTROMETRY [LARGE SCALE ANALYSIS]</scope>
</reference>
<reference key="23">
    <citation type="journal article" date="2013" name="J. Proteome Res.">
        <title>Toward a comprehensive characterization of a human cancer cell phosphoproteome.</title>
        <authorList>
            <person name="Zhou H."/>
            <person name="Di Palma S."/>
            <person name="Preisinger C."/>
            <person name="Peng M."/>
            <person name="Polat A.N."/>
            <person name="Heck A.J."/>
            <person name="Mohammed S."/>
        </authorList>
    </citation>
    <scope>PHOSPHORYLATION [LARGE SCALE ANALYSIS] AT SER-284 AND SER-287</scope>
    <scope>IDENTIFICATION BY MASS SPECTROMETRY [LARGE SCALE ANALYSIS]</scope>
    <source>
        <tissue>Cervix carcinoma</tissue>
        <tissue>Erythroleukemia</tissue>
    </source>
</reference>
<reference key="24">
    <citation type="journal article" date="2014" name="J. Proteomics">
        <title>An enzyme assisted RP-RPLC approach for in-depth analysis of human liver phosphoproteome.</title>
        <authorList>
            <person name="Bian Y."/>
            <person name="Song C."/>
            <person name="Cheng K."/>
            <person name="Dong M."/>
            <person name="Wang F."/>
            <person name="Huang J."/>
            <person name="Sun D."/>
            <person name="Wang L."/>
            <person name="Ye M."/>
            <person name="Zou H."/>
        </authorList>
    </citation>
    <scope>PHOSPHORYLATION [LARGE SCALE ANALYSIS] AT SER-284</scope>
    <scope>IDENTIFICATION BY MASS SPECTROMETRY [LARGE SCALE ANALYSIS]</scope>
    <source>
        <tissue>Liver</tissue>
    </source>
</reference>
<reference key="25">
    <citation type="journal article" date="2015" name="Proteomics">
        <title>N-terminome analysis of the human mitochondrial proteome.</title>
        <authorList>
            <person name="Vaca Jacome A.S."/>
            <person name="Rabilloud T."/>
            <person name="Schaeffer-Reiss C."/>
            <person name="Rompais M."/>
            <person name="Ayoub D."/>
            <person name="Lane L."/>
            <person name="Bairoch A."/>
            <person name="Van Dorsselaer A."/>
            <person name="Carapito C."/>
        </authorList>
    </citation>
    <scope>CLEAVAGE OF SIGNAL PEPTIDE [LARGE SCALE ANALYSIS] AFTER GLY-27</scope>
    <scope>IDENTIFICATION BY MASS SPECTROMETRY [LARGE SCALE ANALYSIS]</scope>
</reference>
<reference key="26">
    <citation type="journal article" date="2015" name="Virology">
        <title>The tight junction protein JAM-A functions as coreceptor for rotavirus entry into MA104 cells.</title>
        <authorList>
            <person name="Torres-Flores J.M."/>
            <person name="Silva-Ayala D."/>
            <person name="Espinoza M.A."/>
            <person name="Lopez S."/>
            <person name="Arias C.F."/>
        </authorList>
    </citation>
    <scope>FUNCTION (MICROBIAL INFECTION)</scope>
    <scope>INTERACTION WITH HUMAN ROTAVIRUS STRAIN WA VP4 PROTEIN</scope>
</reference>
<reference key="27">
    <citation type="journal article" date="2021" name="Gut Microbes">
        <title>Helicobacter pylori PqqE is a new virulence factor that cleaves junctional adhesion molecule A and disrupts gastric epithelial integrity.</title>
        <authorList>
            <person name="Marques M.S."/>
            <person name="Costa A.C."/>
            <person name="Osorio H."/>
            <person name="Pinto M.L."/>
            <person name="Relvas S."/>
            <person name="Dinis-Ribeiro M."/>
            <person name="Carneiro F."/>
            <person name="Leite M."/>
            <person name="Figueiredo C."/>
        </authorList>
    </citation>
    <scope>PROTEOLYTIC CLEAVAGE (MICROBIAL INFECTION)</scope>
</reference>
<reference key="28">
    <citation type="journal article" date="2022" name="Cell. Mol. Life Sci.">
        <title>JAM-A interacts with alpha3beta1 integrin and tetraspanins CD151 and CD9 to regulate collective cell migration of polarized epithelial cells.</title>
        <authorList>
            <person name="Thoelmann S."/>
            <person name="Seebach J."/>
            <person name="Otani T."/>
            <person name="Florin L."/>
            <person name="Schnittler H."/>
            <person name="Gerke V."/>
            <person name="Furuse M."/>
            <person name="Ebnet K."/>
        </authorList>
    </citation>
    <scope>INTERACTION WITH CD151</scope>
</reference>
<reference key="29">
    <citation type="journal article" date="2003" name="Proc. Natl. Acad. Sci. U.S.A.">
        <title>Crystal structure of human junctional adhesion molecule 1: implications for reovirus binding.</title>
        <authorList>
            <person name="Prota A.E."/>
            <person name="Campbell J.A."/>
            <person name="Schelling P."/>
            <person name="Forrest J.C."/>
            <person name="Watson M.J."/>
            <person name="Peters T.R."/>
            <person name="Aurrand-Lions M.A."/>
            <person name="Imhof B.A."/>
            <person name="Dermody T.S."/>
            <person name="Stehle T."/>
        </authorList>
    </citation>
    <scope>X-RAY CRYSTALLOGRAPHY (2.90 ANGSTROMS) OF 27-233</scope>
    <scope>DISULFIDE BONDS</scope>
</reference>
<gene>
    <name type="primary">F11R</name>
    <name type="synonym">JAM1</name>
    <name type="synonym">JCAM</name>
    <name type="ORF">UNQ264/PRO301</name>
</gene>
<feature type="signal peptide" evidence="8 10 16 25">
    <location>
        <begin position="1"/>
        <end position="27"/>
    </location>
</feature>
<feature type="chain" id="PRO_0000015066" description="Junctional adhesion molecule A">
    <location>
        <begin position="28"/>
        <end position="299"/>
    </location>
</feature>
<feature type="topological domain" description="Extracellular" evidence="2">
    <location>
        <begin position="28"/>
        <end position="238"/>
    </location>
</feature>
<feature type="transmembrane region" description="Helical" evidence="2">
    <location>
        <begin position="239"/>
        <end position="259"/>
    </location>
</feature>
<feature type="topological domain" description="Cytoplasmic" evidence="2">
    <location>
        <begin position="260"/>
        <end position="299"/>
    </location>
</feature>
<feature type="domain" description="Ig-like V-type 1">
    <location>
        <begin position="28"/>
        <end position="125"/>
    </location>
</feature>
<feature type="domain" description="Ig-like V-type 2">
    <location>
        <begin position="135"/>
        <end position="228"/>
    </location>
</feature>
<feature type="site" description="(Microbial infection) Cleavage; by H.pylori PqqE" evidence="14">
    <location>
        <begin position="285"/>
        <end position="286"/>
    </location>
</feature>
<feature type="modified residue" description="Phosphoserine" evidence="20">
    <location>
        <position position="281"/>
    </location>
</feature>
<feature type="modified residue" description="Phosphoserine" evidence="19 20 21 22 23 24">
    <location>
        <position position="284"/>
    </location>
</feature>
<feature type="modified residue" description="Phosphoserine" evidence="20 23">
    <location>
        <position position="287"/>
    </location>
</feature>
<feature type="glycosylation site" description="N-linked (GlcNAc...) asparagine" evidence="12">
    <location>
        <position position="185"/>
    </location>
</feature>
<feature type="disulfide bond" evidence="9">
    <location>
        <begin position="50"/>
        <end position="109"/>
    </location>
</feature>
<feature type="disulfide bond" evidence="9">
    <location>
        <begin position="153"/>
        <end position="212"/>
    </location>
</feature>
<feature type="splice variant" id="VSP_056218" description="In isoform 2." evidence="17">
    <location>
        <begin position="81"/>
        <end position="129"/>
    </location>
</feature>
<feature type="strand" evidence="26">
    <location>
        <begin position="30"/>
        <end position="32"/>
    </location>
</feature>
<feature type="strand" evidence="28">
    <location>
        <begin position="36"/>
        <end position="41"/>
    </location>
</feature>
<feature type="strand" evidence="26">
    <location>
        <begin position="47"/>
        <end position="49"/>
    </location>
</feature>
<feature type="strand" evidence="26">
    <location>
        <begin position="51"/>
        <end position="54"/>
    </location>
</feature>
<feature type="strand" evidence="26">
    <location>
        <begin position="56"/>
        <end position="66"/>
    </location>
</feature>
<feature type="strand" evidence="26">
    <location>
        <begin position="69"/>
        <end position="75"/>
    </location>
</feature>
<feature type="strand" evidence="27">
    <location>
        <begin position="76"/>
        <end position="79"/>
    </location>
</feature>
<feature type="turn" evidence="26">
    <location>
        <begin position="81"/>
        <end position="86"/>
    </location>
</feature>
<feature type="strand" evidence="26">
    <location>
        <begin position="88"/>
        <end position="90"/>
    </location>
</feature>
<feature type="strand" evidence="26">
    <location>
        <begin position="93"/>
        <end position="95"/>
    </location>
</feature>
<feature type="helix" evidence="28">
    <location>
        <begin position="101"/>
        <end position="103"/>
    </location>
</feature>
<feature type="strand" evidence="26">
    <location>
        <begin position="105"/>
        <end position="113"/>
    </location>
</feature>
<feature type="strand" evidence="26">
    <location>
        <begin position="123"/>
        <end position="125"/>
    </location>
</feature>
<feature type="strand" evidence="26">
    <location>
        <begin position="128"/>
        <end position="130"/>
    </location>
</feature>
<feature type="strand" evidence="26">
    <location>
        <begin position="140"/>
        <end position="144"/>
    </location>
</feature>
<feature type="strand" evidence="26">
    <location>
        <begin position="149"/>
        <end position="151"/>
    </location>
</feature>
<feature type="strand" evidence="26">
    <location>
        <begin position="163"/>
        <end position="168"/>
    </location>
</feature>
<feature type="strand" evidence="26">
    <location>
        <begin position="177"/>
        <end position="182"/>
    </location>
</feature>
<feature type="turn" evidence="26">
    <location>
        <begin position="192"/>
        <end position="194"/>
    </location>
</feature>
<feature type="strand" evidence="26">
    <location>
        <begin position="197"/>
        <end position="201"/>
    </location>
</feature>
<feature type="helix" evidence="26">
    <location>
        <begin position="204"/>
        <end position="206"/>
    </location>
</feature>
<feature type="strand" evidence="26">
    <location>
        <begin position="210"/>
        <end position="215"/>
    </location>
</feature>
<feature type="strand" evidence="26">
    <location>
        <begin position="217"/>
        <end position="219"/>
    </location>
</feature>
<feature type="strand" evidence="26">
    <location>
        <begin position="230"/>
        <end position="232"/>
    </location>
</feature>
<name>JAM1_HUMAN</name>
<comment type="function">
    <text evidence="1 3 6 7">Seems to play a role in epithelial tight junction formation. Appears early in primordial forms of cell junctions and recruits PARD3 (PubMed:11489913). The association of the PARD6-PARD3 complex may prevent the interaction of PARD3 with JAM1, thereby preventing tight junction assembly (By similarity). Plays a role in regulating monocyte transmigration involved in integrity of epithelial barrier (By similarity). Ligand for integrin alpha-L/beta-2 involved in memory T-cell and neutrophil transmigration (PubMed:11812992). Involved in platelet activation (PubMed:10753840).</text>
</comment>
<comment type="function">
    <text evidence="5">(Microbial infection) Acts as a receptor for Mammalian reovirus sigma-1.</text>
</comment>
<comment type="function">
    <text evidence="13">(Microbial infection) Acts as a receptor for Human Rotavirus strain Wa.</text>
</comment>
<comment type="subunit">
    <text evidence="1 6 11 15">Interacts with the ninth PDZ domain of MPDZ (PubMed:11489913). Interacts with the first PDZ domain of PARD3 (PubMed:11489913). The association between PARD3 and PARD6B probably disrupts this interaction (By similarity). Interacts with ITGAL (via I-domain) (PubMed:15528364). Interacts with CD151 (PubMed:35067832).</text>
</comment>
<comment type="subunit">
    <text evidence="5">(Microbial infection) Interacts with Mammalian reovirus sigma-1 capsid protein.</text>
</comment>
<comment type="subunit">
    <text evidence="13">(Microbial infection) Interacts with Human Rotavirus strain Wa vp4 capsid protein.</text>
</comment>
<comment type="interaction">
    <interactant intactId="EBI-742600">
        <id>Q9Y624</id>
    </interactant>
    <interactant intactId="EBI-11893530">
        <id>Q9NP70</id>
        <label>AMBN</label>
    </interactant>
    <organismsDiffer>false</organismsDiffer>
    <experiments>3</experiments>
</comment>
<comment type="interaction">
    <interactant intactId="EBI-742600">
        <id>Q9Y624</id>
    </interactant>
    <interactant intactId="EBI-1748958">
        <id>P49069</id>
        <label>CAMLG</label>
    </interactant>
    <organismsDiffer>false</organismsDiffer>
    <experiments>3</experiments>
</comment>
<comment type="interaction">
    <interactant intactId="EBI-742600">
        <id>Q9Y624</id>
    </interactant>
    <interactant intactId="EBI-10266796">
        <id>Q8N5M9</id>
        <label>JAGN1</label>
    </interactant>
    <organismsDiffer>false</organismsDiffer>
    <experiments>3</experiments>
</comment>
<comment type="interaction">
    <interactant intactId="EBI-742600">
        <id>Q9Y624</id>
    </interactant>
    <interactant intactId="EBI-1052558">
        <id>Q92615</id>
        <label>LARP4B</label>
    </interactant>
    <organismsDiffer>false</organismsDiffer>
    <experiments>3</experiments>
</comment>
<comment type="interaction">
    <interactant intactId="EBI-742600">
        <id>Q9Y624</id>
    </interactant>
    <interactant intactId="EBI-10317612">
        <id>Q9P0N8</id>
        <label>MARCHF2</label>
    </interactant>
    <organismsDiffer>false</organismsDiffer>
    <experiments>3</experiments>
</comment>
<comment type="interaction">
    <interactant intactId="EBI-742600">
        <id>Q9Y624</id>
    </interactant>
    <interactant intactId="EBI-992788">
        <id>P50281</id>
        <label>MMP14</label>
    </interactant>
    <organismsDiffer>false</organismsDiffer>
    <experiments>3</experiments>
</comment>
<comment type="interaction">
    <interactant intactId="EBI-742600">
        <id>Q9Y624</id>
    </interactant>
    <interactant intactId="EBI-747381">
        <id>Q9BV20</id>
        <label>MRI1</label>
    </interactant>
    <organismsDiffer>false</organismsDiffer>
    <experiments>3</experiments>
</comment>
<comment type="interaction">
    <interactant intactId="EBI-742600">
        <id>Q9Y624</id>
    </interactant>
    <interactant intactId="EBI-13301517">
        <id>Q96S97</id>
        <label>MYADM</label>
    </interactant>
    <organismsDiffer>false</organismsDiffer>
    <experiments>3</experiments>
</comment>
<comment type="interaction">
    <interactant intactId="EBI-742600">
        <id>Q9Y624</id>
    </interactant>
    <interactant intactId="EBI-81968">
        <id>Q8TEW0</id>
        <label>PARD3</label>
    </interactant>
    <organismsDiffer>false</organismsDiffer>
    <experiments>2</experiments>
</comment>
<comment type="interaction">
    <interactant intactId="EBI-742600">
        <id>Q9Y624</id>
    </interactant>
    <interactant intactId="EBI-12092917">
        <id>Q9UHJ9-5</id>
        <label>PGAP2</label>
    </interactant>
    <organismsDiffer>false</organismsDiffer>
    <experiments>3</experiments>
</comment>
<comment type="interaction">
    <interactant intactId="EBI-742600">
        <id>Q9Y624</id>
    </interactant>
    <interactant intactId="EBI-712367">
        <id>Q9UI14</id>
        <label>RABAC1</label>
    </interactant>
    <organismsDiffer>false</organismsDiffer>
    <experiments>3</experiments>
</comment>
<comment type="interaction">
    <interactant intactId="EBI-742600">
        <id>Q9Y624</id>
    </interactant>
    <interactant intactId="EBI-347996">
        <id>O43765</id>
        <label>SGTA</label>
    </interactant>
    <organismsDiffer>false</organismsDiffer>
    <experiments>11</experiments>
</comment>
<comment type="interaction">
    <interactant intactId="EBI-742600">
        <id>Q9Y624</id>
    </interactant>
    <interactant intactId="EBI-8644112">
        <id>Q9BRI3</id>
        <label>SLC30A2</label>
    </interactant>
    <organismsDiffer>false</organismsDiffer>
    <experiments>3</experiments>
</comment>
<comment type="interaction">
    <interactant intactId="EBI-742600">
        <id>Q9Y624</id>
    </interactant>
    <interactant intactId="EBI-12870360">
        <id>P78382</id>
        <label>SLC35A1</label>
    </interactant>
    <organismsDiffer>false</organismsDiffer>
    <experiments>3</experiments>
</comment>
<comment type="interaction">
    <interactant intactId="EBI-742600">
        <id>Q9Y624</id>
    </interactant>
    <interactant intactId="EBI-10244848">
        <id>Q5SQN1</id>
        <label>SNAP47</label>
    </interactant>
    <organismsDiffer>false</organismsDiffer>
    <experiments>3</experiments>
</comment>
<comment type="interaction">
    <interactant intactId="EBI-742600">
        <id>Q9Y624</id>
    </interactant>
    <interactant intactId="EBI-12200293">
        <id>P0DN84</id>
        <label>STRIT1</label>
    </interactant>
    <organismsDiffer>false</organismsDiffer>
    <experiments>3</experiments>
</comment>
<comment type="interaction">
    <interactant intactId="EBI-742600">
        <id>Q9Y624</id>
    </interactant>
    <interactant intactId="EBI-8644968">
        <id>Q9NV29</id>
        <label>TMEM100</label>
    </interactant>
    <organismsDiffer>false</organismsDiffer>
    <experiments>3</experiments>
</comment>
<comment type="interaction">
    <interactant intactId="EBI-742600">
        <id>Q9Y624</id>
    </interactant>
    <interactant intactId="EBI-348587">
        <id>Q9BVK8</id>
        <label>TMEM147</label>
    </interactant>
    <organismsDiffer>false</organismsDiffer>
    <experiments>3</experiments>
</comment>
<comment type="interaction">
    <interactant intactId="EBI-742600">
        <id>Q9Y624</id>
    </interactant>
    <interactant intactId="EBI-2548832">
        <id>Q8N661</id>
        <label>TMEM86B</label>
    </interactant>
    <organismsDiffer>false</organismsDiffer>
    <experiments>3</experiments>
</comment>
<comment type="subcellular location">
    <subcellularLocation>
        <location evidence="4">Cell junction</location>
        <location evidence="4">Tight junction</location>
    </subcellularLocation>
    <subcellularLocation>
        <location evidence="4">Cell membrane</location>
        <topology evidence="4">Single-pass type I membrane protein</topology>
    </subcellularLocation>
    <text evidence="4">Localized at tight junctions of both epithelial and endothelial cells.</text>
</comment>
<comment type="alternative products">
    <event type="alternative splicing"/>
    <isoform>
        <id>Q9Y624-1</id>
        <name>1</name>
        <sequence type="displayed"/>
    </isoform>
    <isoform>
        <id>Q9Y624-2</id>
        <name>2</name>
        <sequence type="described" ref="VSP_056218"/>
    </isoform>
</comment>
<comment type="tissue specificity">
    <text evidence="7">Expressed in endothelium, epithelium and leukocytes (at protein level).</text>
</comment>
<comment type="domain">
    <text evidence="7">The Ig-like V-type 2 domain is necessary and sufficient for interaction with integrin alpha-L/beta-2.</text>
</comment>
<comment type="PTM">
    <text evidence="12 16">N-glycosylated.</text>
</comment>
<comment type="PTM">
    <text evidence="14">(Microbial infection) Cleaved by H.pylori virulence factor PqqE. Cleavage leads to altered tight junction functions.</text>
</comment>
<comment type="similarity">
    <text evidence="18">Belongs to the immunoglobulin superfamily.</text>
</comment>
<dbReference type="EMBL" id="AF111713">
    <property type="protein sequence ID" value="AAD42050.1"/>
    <property type="molecule type" value="mRNA"/>
</dbReference>
<dbReference type="EMBL" id="AF207907">
    <property type="protein sequence ID" value="AAF22829.1"/>
    <property type="molecule type" value="mRNA"/>
</dbReference>
<dbReference type="EMBL" id="AF172398">
    <property type="protein sequence ID" value="AAD48877.1"/>
    <property type="molecule type" value="mRNA"/>
</dbReference>
<dbReference type="EMBL" id="AL136649">
    <property type="protein sequence ID" value="CAB66584.1"/>
    <property type="molecule type" value="mRNA"/>
</dbReference>
<dbReference type="EMBL" id="AY358896">
    <property type="protein sequence ID" value="AAQ89255.1"/>
    <property type="molecule type" value="mRNA"/>
</dbReference>
<dbReference type="EMBL" id="AK304412">
    <property type="protein sequence ID" value="BAH14177.1"/>
    <property type="molecule type" value="mRNA"/>
</dbReference>
<dbReference type="EMBL" id="AL591806">
    <property type="status" value="NOT_ANNOTATED_CDS"/>
    <property type="molecule type" value="Genomic_DNA"/>
</dbReference>
<dbReference type="EMBL" id="BC001533">
    <property type="protein sequence ID" value="AAH01533.1"/>
    <property type="molecule type" value="mRNA"/>
</dbReference>
<dbReference type="CCDS" id="CCDS1213.1">
    <molecule id="Q9Y624-1"/>
</dbReference>
<dbReference type="CCDS" id="CCDS86026.1">
    <molecule id="Q9Y624-2"/>
</dbReference>
<dbReference type="PIR" id="A59406">
    <property type="entry name" value="S56749"/>
</dbReference>
<dbReference type="RefSeq" id="NP_001335020.1">
    <molecule id="Q9Y624-2"/>
    <property type="nucleotide sequence ID" value="NM_001348091.2"/>
</dbReference>
<dbReference type="RefSeq" id="NP_058642.1">
    <molecule id="Q9Y624-1"/>
    <property type="nucleotide sequence ID" value="NM_016946.6"/>
</dbReference>
<dbReference type="PDB" id="1NBQ">
    <property type="method" value="X-ray"/>
    <property type="resolution" value="2.90 A"/>
    <property type="chains" value="A/B=27-233"/>
</dbReference>
<dbReference type="PDB" id="3EOY">
    <property type="method" value="X-ray"/>
    <property type="resolution" value="3.40 A"/>
    <property type="chains" value="G/H/I/J/K/L=28-129"/>
</dbReference>
<dbReference type="PDB" id="3TSZ">
    <property type="method" value="X-ray"/>
    <property type="resolution" value="2.50 A"/>
    <property type="chains" value="B=288-299"/>
</dbReference>
<dbReference type="PDB" id="4ODB">
    <property type="method" value="X-ray"/>
    <property type="resolution" value="3.20 A"/>
    <property type="chains" value="D/E/F=28-129"/>
</dbReference>
<dbReference type="PDBsum" id="1NBQ"/>
<dbReference type="PDBsum" id="3EOY"/>
<dbReference type="PDBsum" id="3TSZ"/>
<dbReference type="PDBsum" id="4ODB"/>
<dbReference type="SMR" id="Q9Y624"/>
<dbReference type="BioGRID" id="119153">
    <property type="interactions" value="83"/>
</dbReference>
<dbReference type="CORUM" id="Q9Y624"/>
<dbReference type="FunCoup" id="Q9Y624">
    <property type="interactions" value="485"/>
</dbReference>
<dbReference type="IntAct" id="Q9Y624">
    <property type="interactions" value="46"/>
</dbReference>
<dbReference type="MINT" id="Q9Y624"/>
<dbReference type="STRING" id="9606.ENSP00000357005"/>
<dbReference type="GlyConnect" id="1427">
    <property type="glycosylation" value="12 N-Linked glycans (1 site)"/>
</dbReference>
<dbReference type="GlyCosmos" id="Q9Y624">
    <property type="glycosylation" value="1 site, 13 glycans"/>
</dbReference>
<dbReference type="GlyGen" id="Q9Y624">
    <property type="glycosylation" value="5 sites, 14 N-linked glycans (1 site), 2 O-linked glycans (3 sites)"/>
</dbReference>
<dbReference type="iPTMnet" id="Q9Y624"/>
<dbReference type="MetOSite" id="Q9Y624"/>
<dbReference type="PhosphoSitePlus" id="Q9Y624"/>
<dbReference type="SwissPalm" id="Q9Y624"/>
<dbReference type="BioMuta" id="F11R"/>
<dbReference type="DMDM" id="10720061"/>
<dbReference type="jPOST" id="Q9Y624"/>
<dbReference type="MassIVE" id="Q9Y624"/>
<dbReference type="PaxDb" id="9606-ENSP00000357005"/>
<dbReference type="PeptideAtlas" id="Q9Y624"/>
<dbReference type="ProteomicsDB" id="7002"/>
<dbReference type="ProteomicsDB" id="86590">
    <molecule id="Q9Y624-1"/>
</dbReference>
<dbReference type="Pumba" id="Q9Y624"/>
<dbReference type="Antibodypedia" id="3317">
    <property type="antibodies" value="684 antibodies from 46 providers"/>
</dbReference>
<dbReference type="DNASU" id="50848"/>
<dbReference type="Ensembl" id="ENST00000368026.11">
    <molecule id="Q9Y624-1"/>
    <property type="protein sequence ID" value="ENSP00000357005.5"/>
    <property type="gene ID" value="ENSG00000158769.19"/>
</dbReference>
<dbReference type="Ensembl" id="ENST00000537746.1">
    <molecule id="Q9Y624-2"/>
    <property type="protein sequence ID" value="ENSP00000440812.1"/>
    <property type="gene ID" value="ENSG00000158769.19"/>
</dbReference>
<dbReference type="GeneID" id="50848"/>
<dbReference type="KEGG" id="hsa:50848"/>
<dbReference type="MANE-Select" id="ENST00000368026.11">
    <property type="protein sequence ID" value="ENSP00000357005.5"/>
    <property type="RefSeq nucleotide sequence ID" value="NM_016946.6"/>
    <property type="RefSeq protein sequence ID" value="NP_058642.1"/>
</dbReference>
<dbReference type="UCSC" id="uc009wtt.4">
    <molecule id="Q9Y624-1"/>
    <property type="organism name" value="human"/>
</dbReference>
<dbReference type="AGR" id="HGNC:14685"/>
<dbReference type="CTD" id="50848"/>
<dbReference type="DisGeNET" id="50848"/>
<dbReference type="GeneCards" id="F11R"/>
<dbReference type="HGNC" id="HGNC:14685">
    <property type="gene designation" value="F11R"/>
</dbReference>
<dbReference type="HPA" id="ENSG00000158769">
    <property type="expression patterns" value="Low tissue specificity"/>
</dbReference>
<dbReference type="MIM" id="605721">
    <property type="type" value="gene"/>
</dbReference>
<dbReference type="neXtProt" id="NX_Q9Y624"/>
<dbReference type="OpenTargets" id="ENSG00000158769"/>
<dbReference type="PharmGKB" id="PA29991"/>
<dbReference type="VEuPathDB" id="HostDB:ENSG00000158769"/>
<dbReference type="eggNOG" id="ENOG502QWVN">
    <property type="taxonomic scope" value="Eukaryota"/>
</dbReference>
<dbReference type="GeneTree" id="ENSGT00940000159186"/>
<dbReference type="HOGENOM" id="CLU_067351_0_0_1"/>
<dbReference type="InParanoid" id="Q9Y624"/>
<dbReference type="OMA" id="VEWKFVH"/>
<dbReference type="OrthoDB" id="10031887at2759"/>
<dbReference type="PAN-GO" id="Q9Y624">
    <property type="GO annotations" value="4 GO annotations based on evolutionary models"/>
</dbReference>
<dbReference type="PhylomeDB" id="Q9Y624"/>
<dbReference type="TreeFam" id="TF343984"/>
<dbReference type="PathwayCommons" id="Q9Y624"/>
<dbReference type="Reactome" id="R-HSA-202733">
    <property type="pathway name" value="Cell surface interactions at the vascular wall"/>
</dbReference>
<dbReference type="Reactome" id="R-HSA-216083">
    <property type="pathway name" value="Integrin cell surface interactions"/>
</dbReference>
<dbReference type="Reactome" id="R-HSA-2173791">
    <property type="pathway name" value="TGF-beta receptor signaling in EMT (epithelial to mesenchymal transition)"/>
</dbReference>
<dbReference type="Reactome" id="R-HSA-420029">
    <property type="pathway name" value="Tight junction interactions"/>
</dbReference>
<dbReference type="SignaLink" id="Q9Y624"/>
<dbReference type="SIGNOR" id="Q9Y624"/>
<dbReference type="BioGRID-ORCS" id="50848">
    <property type="hits" value="17 hits in 1157 CRISPR screens"/>
</dbReference>
<dbReference type="ChiTaRS" id="F11R">
    <property type="organism name" value="human"/>
</dbReference>
<dbReference type="EvolutionaryTrace" id="Q9Y624"/>
<dbReference type="GeneWiki" id="F11_receptor"/>
<dbReference type="GenomeRNAi" id="50848"/>
<dbReference type="Pharos" id="Q9Y624">
    <property type="development level" value="Tbio"/>
</dbReference>
<dbReference type="PRO" id="PR:Q9Y624"/>
<dbReference type="Proteomes" id="UP000005640">
    <property type="component" value="Chromosome 1"/>
</dbReference>
<dbReference type="RNAct" id="Q9Y624">
    <property type="molecule type" value="protein"/>
</dbReference>
<dbReference type="Bgee" id="ENSG00000158769">
    <property type="expression patterns" value="Expressed in olfactory segment of nasal mucosa and 136 other cell types or tissues"/>
</dbReference>
<dbReference type="ExpressionAtlas" id="Q9Y624">
    <property type="expression patterns" value="baseline and differential"/>
</dbReference>
<dbReference type="GO" id="GO:0005923">
    <property type="term" value="C:bicellular tight junction"/>
    <property type="evidence" value="ECO:0000314"/>
    <property type="project" value="UniProtKB"/>
</dbReference>
<dbReference type="GO" id="GO:0030054">
    <property type="term" value="C:cell junction"/>
    <property type="evidence" value="ECO:0000304"/>
    <property type="project" value="Reactome"/>
</dbReference>
<dbReference type="GO" id="GO:0005911">
    <property type="term" value="C:cell-cell junction"/>
    <property type="evidence" value="ECO:0000304"/>
    <property type="project" value="ProtInc"/>
</dbReference>
<dbReference type="GO" id="GO:0070062">
    <property type="term" value="C:extracellular exosome"/>
    <property type="evidence" value="ECO:0007005"/>
    <property type="project" value="UniProtKB"/>
</dbReference>
<dbReference type="GO" id="GO:0005886">
    <property type="term" value="C:plasma membrane"/>
    <property type="evidence" value="ECO:0000314"/>
    <property type="project" value="LIFEdb"/>
</dbReference>
<dbReference type="GO" id="GO:0032991">
    <property type="term" value="C:protein-containing complex"/>
    <property type="evidence" value="ECO:0000314"/>
    <property type="project" value="ARUK-UCL"/>
</dbReference>
<dbReference type="GO" id="GO:0070160">
    <property type="term" value="C:tight junction"/>
    <property type="evidence" value="ECO:0000315"/>
    <property type="project" value="ARUK-UCL"/>
</dbReference>
<dbReference type="GO" id="GO:0045296">
    <property type="term" value="F:cadherin binding"/>
    <property type="evidence" value="ECO:0007005"/>
    <property type="project" value="BHF-UCL"/>
</dbReference>
<dbReference type="GO" id="GO:0005178">
    <property type="term" value="F:integrin binding"/>
    <property type="evidence" value="ECO:0000353"/>
    <property type="project" value="ARUK-UCL"/>
</dbReference>
<dbReference type="GO" id="GO:0030165">
    <property type="term" value="F:PDZ domain binding"/>
    <property type="evidence" value="ECO:0000353"/>
    <property type="project" value="UniProtKB"/>
</dbReference>
<dbReference type="GO" id="GO:0042803">
    <property type="term" value="F:protein homodimerization activity"/>
    <property type="evidence" value="ECO:0000353"/>
    <property type="project" value="ARUK-UCL"/>
</dbReference>
<dbReference type="GO" id="GO:0001618">
    <property type="term" value="F:virus receptor activity"/>
    <property type="evidence" value="ECO:0007669"/>
    <property type="project" value="UniProtKB-KW"/>
</dbReference>
<dbReference type="GO" id="GO:0031032">
    <property type="term" value="P:actomyosin structure organization"/>
    <property type="evidence" value="ECO:0000315"/>
    <property type="project" value="UniProtKB"/>
</dbReference>
<dbReference type="GO" id="GO:0098609">
    <property type="term" value="P:cell-cell adhesion"/>
    <property type="evidence" value="ECO:0000314"/>
    <property type="project" value="ARUK-UCL"/>
</dbReference>
<dbReference type="GO" id="GO:0071260">
    <property type="term" value="P:cellular response to mechanical stimulus"/>
    <property type="evidence" value="ECO:0000314"/>
    <property type="project" value="ARUK-UCL"/>
</dbReference>
<dbReference type="GO" id="GO:0090557">
    <property type="term" value="P:establishment of endothelial intestinal barrier"/>
    <property type="evidence" value="ECO:0000315"/>
    <property type="project" value="UniProtKB"/>
</dbReference>
<dbReference type="GO" id="GO:0006954">
    <property type="term" value="P:inflammatory response"/>
    <property type="evidence" value="ECO:0000304"/>
    <property type="project" value="ProtInc"/>
</dbReference>
<dbReference type="GO" id="GO:0050892">
    <property type="term" value="P:intestinal absorption"/>
    <property type="evidence" value="ECO:0000315"/>
    <property type="project" value="UniProtKB"/>
</dbReference>
<dbReference type="GO" id="GO:0007159">
    <property type="term" value="P:leukocyte cell-cell adhesion"/>
    <property type="evidence" value="ECO:0000315"/>
    <property type="project" value="ARUK-UCL"/>
</dbReference>
<dbReference type="GO" id="GO:0035633">
    <property type="term" value="P:maintenance of blood-brain barrier"/>
    <property type="evidence" value="ECO:0000303"/>
    <property type="project" value="ARUK-UCL"/>
</dbReference>
<dbReference type="GO" id="GO:0035683">
    <property type="term" value="P:memory T cell extravasation"/>
    <property type="evidence" value="ECO:0000314"/>
    <property type="project" value="ARUK-UCL"/>
</dbReference>
<dbReference type="GO" id="GO:0051497">
    <property type="term" value="P:negative regulation of stress fiber assembly"/>
    <property type="evidence" value="ECO:0000315"/>
    <property type="project" value="ARUK-UCL"/>
</dbReference>
<dbReference type="GO" id="GO:1903142">
    <property type="term" value="P:positive regulation of establishment of endothelial barrier"/>
    <property type="evidence" value="ECO:0000315"/>
    <property type="project" value="ARUK-UCL"/>
</dbReference>
<dbReference type="GO" id="GO:1901731">
    <property type="term" value="P:positive regulation of platelet aggregation"/>
    <property type="evidence" value="ECO:0000314"/>
    <property type="project" value="ARUK-UCL"/>
</dbReference>
<dbReference type="GO" id="GO:0035025">
    <property type="term" value="P:positive regulation of Rho protein signal transduction"/>
    <property type="evidence" value="ECO:0000314"/>
    <property type="project" value="ARUK-UCL"/>
</dbReference>
<dbReference type="GO" id="GO:1902396">
    <property type="term" value="P:protein localization to bicellular tight junction"/>
    <property type="evidence" value="ECO:0000315"/>
    <property type="project" value="ARUK-UCL"/>
</dbReference>
<dbReference type="GO" id="GO:0072659">
    <property type="term" value="P:protein localization to plasma membrane"/>
    <property type="evidence" value="ECO:0000315"/>
    <property type="project" value="UniProtKB"/>
</dbReference>
<dbReference type="GO" id="GO:0032956">
    <property type="term" value="P:regulation of actin cytoskeleton organization"/>
    <property type="evidence" value="ECO:0000314"/>
    <property type="project" value="ARUK-UCL"/>
</dbReference>
<dbReference type="GO" id="GO:2000810">
    <property type="term" value="P:regulation of bicellular tight junction assembly"/>
    <property type="evidence" value="ECO:0000315"/>
    <property type="project" value="ARUK-UCL"/>
</dbReference>
<dbReference type="GO" id="GO:0008360">
    <property type="term" value="P:regulation of cell shape"/>
    <property type="evidence" value="ECO:0000314"/>
    <property type="project" value="ARUK-UCL"/>
</dbReference>
<dbReference type="GO" id="GO:0001817">
    <property type="term" value="P:regulation of cytokine production"/>
    <property type="evidence" value="ECO:0007669"/>
    <property type="project" value="Ensembl"/>
</dbReference>
<dbReference type="GO" id="GO:0051493">
    <property type="term" value="P:regulation of cytoskeleton organization"/>
    <property type="evidence" value="ECO:0000315"/>
    <property type="project" value="ARUK-UCL"/>
</dbReference>
<dbReference type="GO" id="GO:0090559">
    <property type="term" value="P:regulation of membrane permeability"/>
    <property type="evidence" value="ECO:0000315"/>
    <property type="project" value="UniProtKB"/>
</dbReference>
<dbReference type="CDD" id="cd20950">
    <property type="entry name" value="IgI_2_JAM1"/>
    <property type="match status" value="1"/>
</dbReference>
<dbReference type="CDD" id="cd20946">
    <property type="entry name" value="IgV_1_JAM1-like"/>
    <property type="match status" value="1"/>
</dbReference>
<dbReference type="FunFam" id="2.60.40.10:FF:000342">
    <property type="entry name" value="Junctional adhesion molecule A"/>
    <property type="match status" value="1"/>
</dbReference>
<dbReference type="FunFam" id="2.60.40.10:FF:000906">
    <property type="entry name" value="Junctional adhesion molecule A"/>
    <property type="match status" value="1"/>
</dbReference>
<dbReference type="Gene3D" id="2.60.40.10">
    <property type="entry name" value="Immunoglobulins"/>
    <property type="match status" value="2"/>
</dbReference>
<dbReference type="InterPro" id="IPR042456">
    <property type="entry name" value="F11R"/>
</dbReference>
<dbReference type="InterPro" id="IPR007110">
    <property type="entry name" value="Ig-like_dom"/>
</dbReference>
<dbReference type="InterPro" id="IPR036179">
    <property type="entry name" value="Ig-like_dom_sf"/>
</dbReference>
<dbReference type="InterPro" id="IPR013783">
    <property type="entry name" value="Ig-like_fold"/>
</dbReference>
<dbReference type="InterPro" id="IPR003599">
    <property type="entry name" value="Ig_sub"/>
</dbReference>
<dbReference type="InterPro" id="IPR003598">
    <property type="entry name" value="Ig_sub2"/>
</dbReference>
<dbReference type="InterPro" id="IPR013106">
    <property type="entry name" value="Ig_V-set"/>
</dbReference>
<dbReference type="PANTHER" id="PTHR45113">
    <property type="entry name" value="JUNCTIONAL ADHESION MOLECULE A"/>
    <property type="match status" value="1"/>
</dbReference>
<dbReference type="PANTHER" id="PTHR45113:SF1">
    <property type="entry name" value="JUNCTIONAL ADHESION MOLECULE A"/>
    <property type="match status" value="1"/>
</dbReference>
<dbReference type="Pfam" id="PF13927">
    <property type="entry name" value="Ig_3"/>
    <property type="match status" value="1"/>
</dbReference>
<dbReference type="Pfam" id="PF07686">
    <property type="entry name" value="V-set"/>
    <property type="match status" value="1"/>
</dbReference>
<dbReference type="SMART" id="SM00409">
    <property type="entry name" value="IG"/>
    <property type="match status" value="2"/>
</dbReference>
<dbReference type="SMART" id="SM00408">
    <property type="entry name" value="IGc2"/>
    <property type="match status" value="2"/>
</dbReference>
<dbReference type="SMART" id="SM00406">
    <property type="entry name" value="IGv"/>
    <property type="match status" value="1"/>
</dbReference>
<dbReference type="SUPFAM" id="SSF48726">
    <property type="entry name" value="Immunoglobulin"/>
    <property type="match status" value="2"/>
</dbReference>
<dbReference type="PROSITE" id="PS50835">
    <property type="entry name" value="IG_LIKE"/>
    <property type="match status" value="2"/>
</dbReference>
<protein>
    <recommendedName>
        <fullName>Junctional adhesion molecule A</fullName>
        <shortName>JAM-A</shortName>
    </recommendedName>
    <alternativeName>
        <fullName>Junctional adhesion molecule 1</fullName>
        <shortName>JAM-1</shortName>
    </alternativeName>
    <alternativeName>
        <fullName>Platelet F11 receptor</fullName>
    </alternativeName>
    <alternativeName>
        <fullName>Platelet adhesion molecule 1</fullName>
        <shortName>PAM-1</shortName>
    </alternativeName>
    <cdAntigenName>CD321</cdAntigenName>
</protein>
<sequence>MGTKAQVERKLLCLFILAILLCSLALGSVTVHSSEPEVRIPENNPVKLSCAYSGFSSPRVEWKFDQGDTTRLVCYNNKITASYEDRVTFLPTGITFKSVTREDTGTYTCMVSEEGGNSYGEVKVKLIVLVPPSKPTVNIPSSATIGNRAVLTCSEQDGSPPSEYTWFKDGIVMPTNPKSTRAFSNSSYVLNPTTGELVFDPLSASDTGEYSCEARNGYGTPMTSNAVRMEAVERNVGVIVAAVLVTLILLGILVFGIWFAYSRGHFDRTKKGTSSKKVIYSQPSARSEGEFKQTSSFLV</sequence>
<keyword id="KW-0002">3D-structure</keyword>
<keyword id="KW-0025">Alternative splicing</keyword>
<keyword id="KW-0965">Cell junction</keyword>
<keyword id="KW-1003">Cell membrane</keyword>
<keyword id="KW-0903">Direct protein sequencing</keyword>
<keyword id="KW-1015">Disulfide bond</keyword>
<keyword id="KW-0325">Glycoprotein</keyword>
<keyword id="KW-1183">Host cell receptor for virus entry</keyword>
<keyword id="KW-0945">Host-virus interaction</keyword>
<keyword id="KW-0393">Immunoglobulin domain</keyword>
<keyword id="KW-0472">Membrane</keyword>
<keyword id="KW-0597">Phosphoprotein</keyword>
<keyword id="KW-1267">Proteomics identification</keyword>
<keyword id="KW-0675">Receptor</keyword>
<keyword id="KW-1185">Reference proteome</keyword>
<keyword id="KW-0677">Repeat</keyword>
<keyword id="KW-0732">Signal</keyword>
<keyword id="KW-0796">Tight junction</keyword>
<keyword id="KW-0812">Transmembrane</keyword>
<keyword id="KW-1133">Transmembrane helix</keyword>